<feature type="chain" id="PRO_1000124763" description="Probable malate:quinone oxidoreductase">
    <location>
        <begin position="1"/>
        <end position="500"/>
    </location>
</feature>
<reference key="1">
    <citation type="submission" date="2008-10" db="EMBL/GenBank/DDBJ databases">
        <title>Genome sequence of Bacillus anthracis str. CDC 684.</title>
        <authorList>
            <person name="Dodson R.J."/>
            <person name="Munk A.C."/>
            <person name="Brettin T."/>
            <person name="Bruce D."/>
            <person name="Detter C."/>
            <person name="Tapia R."/>
            <person name="Han C."/>
            <person name="Sutton G."/>
            <person name="Sims D."/>
        </authorList>
    </citation>
    <scope>NUCLEOTIDE SEQUENCE [LARGE SCALE GENOMIC DNA]</scope>
    <source>
        <strain>CDC 684 / NRRL 3495</strain>
    </source>
</reference>
<protein>
    <recommendedName>
        <fullName evidence="1">Probable malate:quinone oxidoreductase</fullName>
        <ecNumber evidence="1">1.1.5.4</ecNumber>
    </recommendedName>
    <alternativeName>
        <fullName evidence="1">MQO</fullName>
    </alternativeName>
    <alternativeName>
        <fullName evidence="1">Malate dehydrogenase [quinone]</fullName>
    </alternativeName>
</protein>
<keyword id="KW-0274">FAD</keyword>
<keyword id="KW-0285">Flavoprotein</keyword>
<keyword id="KW-0560">Oxidoreductase</keyword>
<keyword id="KW-0816">Tricarboxylic acid cycle</keyword>
<dbReference type="EC" id="1.1.5.4" evidence="1"/>
<dbReference type="EMBL" id="CP001215">
    <property type="protein sequence ID" value="ACP12399.1"/>
    <property type="molecule type" value="Genomic_DNA"/>
</dbReference>
<dbReference type="RefSeq" id="WP_000069158.1">
    <property type="nucleotide sequence ID" value="NC_012581.1"/>
</dbReference>
<dbReference type="SMR" id="C3LEY8"/>
<dbReference type="KEGG" id="bah:BAMEG_1631"/>
<dbReference type="HOGENOM" id="CLU_028151_0_0_9"/>
<dbReference type="UniPathway" id="UPA00223">
    <property type="reaction ID" value="UER01008"/>
</dbReference>
<dbReference type="GO" id="GO:0047545">
    <property type="term" value="F:2-hydroxyglutarate dehydrogenase activity"/>
    <property type="evidence" value="ECO:0007669"/>
    <property type="project" value="TreeGrafter"/>
</dbReference>
<dbReference type="GO" id="GO:0008924">
    <property type="term" value="F:L-malate dehydrogenase (quinone) activity"/>
    <property type="evidence" value="ECO:0007669"/>
    <property type="project" value="UniProtKB-UniRule"/>
</dbReference>
<dbReference type="GO" id="GO:0006099">
    <property type="term" value="P:tricarboxylic acid cycle"/>
    <property type="evidence" value="ECO:0007669"/>
    <property type="project" value="UniProtKB-UniRule"/>
</dbReference>
<dbReference type="HAMAP" id="MF_00212">
    <property type="entry name" value="MQO"/>
    <property type="match status" value="1"/>
</dbReference>
<dbReference type="InterPro" id="IPR036188">
    <property type="entry name" value="FAD/NAD-bd_sf"/>
</dbReference>
<dbReference type="InterPro" id="IPR006231">
    <property type="entry name" value="MQO"/>
</dbReference>
<dbReference type="NCBIfam" id="TIGR01320">
    <property type="entry name" value="mal_quin_oxido"/>
    <property type="match status" value="1"/>
</dbReference>
<dbReference type="NCBIfam" id="NF003603">
    <property type="entry name" value="PRK05257.1-1"/>
    <property type="match status" value="1"/>
</dbReference>
<dbReference type="NCBIfam" id="NF003604">
    <property type="entry name" value="PRK05257.1-3"/>
    <property type="match status" value="1"/>
</dbReference>
<dbReference type="NCBIfam" id="NF003605">
    <property type="entry name" value="PRK05257.1-4"/>
    <property type="match status" value="1"/>
</dbReference>
<dbReference type="NCBIfam" id="NF003606">
    <property type="entry name" value="PRK05257.2-1"/>
    <property type="match status" value="1"/>
</dbReference>
<dbReference type="NCBIfam" id="NF003608">
    <property type="entry name" value="PRK05257.2-4"/>
    <property type="match status" value="1"/>
</dbReference>
<dbReference type="NCBIfam" id="NF003610">
    <property type="entry name" value="PRK05257.3-1"/>
    <property type="match status" value="1"/>
</dbReference>
<dbReference type="NCBIfam" id="NF003611">
    <property type="entry name" value="PRK05257.3-2"/>
    <property type="match status" value="1"/>
</dbReference>
<dbReference type="NCBIfam" id="NF009875">
    <property type="entry name" value="PRK13339.1"/>
    <property type="match status" value="1"/>
</dbReference>
<dbReference type="PANTHER" id="PTHR43104">
    <property type="entry name" value="L-2-HYDROXYGLUTARATE DEHYDROGENASE, MITOCHONDRIAL"/>
    <property type="match status" value="1"/>
</dbReference>
<dbReference type="PANTHER" id="PTHR43104:SF2">
    <property type="entry name" value="L-2-HYDROXYGLUTARATE DEHYDROGENASE, MITOCHONDRIAL"/>
    <property type="match status" value="1"/>
</dbReference>
<dbReference type="Pfam" id="PF06039">
    <property type="entry name" value="Mqo"/>
    <property type="match status" value="1"/>
</dbReference>
<dbReference type="SUPFAM" id="SSF51905">
    <property type="entry name" value="FAD/NAD(P)-binding domain"/>
    <property type="match status" value="1"/>
</dbReference>
<organism>
    <name type="scientific">Bacillus anthracis (strain CDC 684 / NRRL 3495)</name>
    <dbReference type="NCBI Taxonomy" id="568206"/>
    <lineage>
        <taxon>Bacteria</taxon>
        <taxon>Bacillati</taxon>
        <taxon>Bacillota</taxon>
        <taxon>Bacilli</taxon>
        <taxon>Bacillales</taxon>
        <taxon>Bacillaceae</taxon>
        <taxon>Bacillus</taxon>
        <taxon>Bacillus cereus group</taxon>
    </lineage>
</organism>
<gene>
    <name evidence="1" type="primary">mqo</name>
    <name type="ordered locus">BAMEG_1631</name>
</gene>
<evidence type="ECO:0000255" key="1">
    <source>
        <dbReference type="HAMAP-Rule" id="MF_00212"/>
    </source>
</evidence>
<name>MQO_BACAC</name>
<accession>C3LEY8</accession>
<proteinExistence type="inferred from homology"/>
<sequence length="500" mass="55181">MSNMQQKTDVILIGAGIMSATLGSLLKELAPEWEIKVFEKLASAGEESSNEWNNAGTGHSALCELNYTSEKSDGSIDISKAVKVNEQFQLSRQFWAYLVKSKLIRNPQDFIMPLPHMSLVQGEKNVEFLKNRFEALSKNPLFQGMEFSDAPETLKKWLPLIMEGRTSNEPMAATKIDSGTDVNFGALTRMLFDYLKTKDVELNYKHSVENIKRTKNGLWEVKVHDMNSGKIEHHTAKFVFIGGGGGSLPLLQKTGIPESKHIGGFPVSGLFMVCKNQKVVEQHHAKVYGKAKVGAPPMSVPHLDTRYIDNKKALLFGPFAGFSPKFLKTGSNLDLIGSVKPNNVLTMLAAGVKEMGLTKYLIQQVMLSHEKRMEELREFIPNAKSEDWDIVVAGQRVQVIKDTDAGGKGTLQFGTEVVSAADGSIAALLGASPGASTAVHVMLEVLEKCFPSRMVEWEGKIKEMIPSYGISLTENPRLFQDLHTSTGRTLGLNEKETVHN</sequence>
<comment type="catalytic activity">
    <reaction evidence="1">
        <text>(S)-malate + a quinone = a quinol + oxaloacetate</text>
        <dbReference type="Rhea" id="RHEA:46012"/>
        <dbReference type="ChEBI" id="CHEBI:15589"/>
        <dbReference type="ChEBI" id="CHEBI:16452"/>
        <dbReference type="ChEBI" id="CHEBI:24646"/>
        <dbReference type="ChEBI" id="CHEBI:132124"/>
        <dbReference type="EC" id="1.1.5.4"/>
    </reaction>
</comment>
<comment type="cofactor">
    <cofactor evidence="1">
        <name>FAD</name>
        <dbReference type="ChEBI" id="CHEBI:57692"/>
    </cofactor>
</comment>
<comment type="pathway">
    <text evidence="1">Carbohydrate metabolism; tricarboxylic acid cycle; oxaloacetate from (S)-malate (quinone route): step 1/1.</text>
</comment>
<comment type="similarity">
    <text evidence="1">Belongs to the MQO family.</text>
</comment>